<accession>B1Y5W3</accession>
<reference key="1">
    <citation type="submission" date="2008-03" db="EMBL/GenBank/DDBJ databases">
        <title>Complete sequence of Leptothrix cholodnii SP-6.</title>
        <authorList>
            <consortium name="US DOE Joint Genome Institute"/>
            <person name="Copeland A."/>
            <person name="Lucas S."/>
            <person name="Lapidus A."/>
            <person name="Glavina del Rio T."/>
            <person name="Dalin E."/>
            <person name="Tice H."/>
            <person name="Bruce D."/>
            <person name="Goodwin L."/>
            <person name="Pitluck S."/>
            <person name="Chertkov O."/>
            <person name="Brettin T."/>
            <person name="Detter J.C."/>
            <person name="Han C."/>
            <person name="Kuske C.R."/>
            <person name="Schmutz J."/>
            <person name="Larimer F."/>
            <person name="Land M."/>
            <person name="Hauser L."/>
            <person name="Kyrpides N."/>
            <person name="Lykidis A."/>
            <person name="Emerson D."/>
            <person name="Richardson P."/>
        </authorList>
    </citation>
    <scope>NUCLEOTIDE SEQUENCE [LARGE SCALE GENOMIC DNA]</scope>
    <source>
        <strain>ATCC 51168 / LMG 8142 / SP-6</strain>
    </source>
</reference>
<organism>
    <name type="scientific">Leptothrix cholodnii (strain ATCC 51168 / LMG 8142 / SP-6)</name>
    <name type="common">Leptothrix discophora (strain SP-6)</name>
    <dbReference type="NCBI Taxonomy" id="395495"/>
    <lineage>
        <taxon>Bacteria</taxon>
        <taxon>Pseudomonadati</taxon>
        <taxon>Pseudomonadota</taxon>
        <taxon>Betaproteobacteria</taxon>
        <taxon>Burkholderiales</taxon>
        <taxon>Sphaerotilaceae</taxon>
        <taxon>Leptothrix</taxon>
    </lineage>
</organism>
<keyword id="KW-0119">Carbohydrate metabolism</keyword>
<keyword id="KW-0963">Cytoplasm</keyword>
<keyword id="KW-0378">Hydrolase</keyword>
<keyword id="KW-0460">Magnesium</keyword>
<keyword id="KW-0479">Metal-binding</keyword>
<keyword id="KW-1185">Reference proteome</keyword>
<feature type="chain" id="PRO_0000364591" description="Fructose-1,6-bisphosphatase class 1 2">
    <location>
        <begin position="1"/>
        <end position="365"/>
    </location>
</feature>
<feature type="binding site" evidence="1">
    <location>
        <position position="100"/>
    </location>
    <ligand>
        <name>Mg(2+)</name>
        <dbReference type="ChEBI" id="CHEBI:18420"/>
        <label>1</label>
    </ligand>
</feature>
<feature type="binding site" evidence="1">
    <location>
        <position position="122"/>
    </location>
    <ligand>
        <name>Mg(2+)</name>
        <dbReference type="ChEBI" id="CHEBI:18420"/>
        <label>1</label>
    </ligand>
</feature>
<feature type="binding site" evidence="1">
    <location>
        <position position="122"/>
    </location>
    <ligand>
        <name>Mg(2+)</name>
        <dbReference type="ChEBI" id="CHEBI:18420"/>
        <label>2</label>
    </ligand>
</feature>
<feature type="binding site" evidence="1">
    <location>
        <position position="124"/>
    </location>
    <ligand>
        <name>Mg(2+)</name>
        <dbReference type="ChEBI" id="CHEBI:18420"/>
        <label>1</label>
    </ligand>
</feature>
<feature type="binding site" evidence="1">
    <location>
        <begin position="125"/>
        <end position="128"/>
    </location>
    <ligand>
        <name>substrate</name>
    </ligand>
</feature>
<feature type="binding site" evidence="1">
    <location>
        <position position="125"/>
    </location>
    <ligand>
        <name>Mg(2+)</name>
        <dbReference type="ChEBI" id="CHEBI:18420"/>
        <label>2</label>
    </ligand>
</feature>
<feature type="binding site" evidence="1">
    <location>
        <position position="221"/>
    </location>
    <ligand>
        <name>substrate</name>
    </ligand>
</feature>
<feature type="binding site" evidence="1">
    <location>
        <position position="293"/>
    </location>
    <ligand>
        <name>Mg(2+)</name>
        <dbReference type="ChEBI" id="CHEBI:18420"/>
        <label>2</label>
    </ligand>
</feature>
<proteinExistence type="inferred from homology"/>
<protein>
    <recommendedName>
        <fullName evidence="1">Fructose-1,6-bisphosphatase class 1 2</fullName>
        <shortName evidence="1">FBPase class 1 2</shortName>
        <ecNumber evidence="1">3.1.3.11</ecNumber>
    </recommendedName>
    <alternativeName>
        <fullName evidence="1">D-fructose-1,6-bisphosphate 1-phosphohydrolase class 1 2</fullName>
    </alternativeName>
</protein>
<sequence>MPLSNRSTLTQYLIEERRRFPGASGELNALILDVSLACKAIARAVAFGELGDALGDAAAMPTGGAVNVQGEVQKKLDVLSNEVFIRRNEWSGSLAGMASEEMETPYQIPGQYPRGKYLLVFDPLDGSSNIDVNVSVGSIFSILRAPQDVIDSGRDVTEADFLQPGAAQVAAGYALYGPTTMLMLTVGNGVAGFTLNPTLGEFMLTHANVTVPADTREFAINASNARFWEPPVKRYVDECLAGATGPRGKDFNMRWIASMVAEAHRILMRGGVFMYPRDTKDASKPGRLRLLYEANPIGMLMEQAGGRASTGRQPMLGVKPTSLHQRIGLVFGSKNEVERIERYHHEPVTREFATPLFAERSLFRD</sequence>
<name>F16A2_LEPCP</name>
<comment type="catalytic activity">
    <reaction evidence="1">
        <text>beta-D-fructose 1,6-bisphosphate + H2O = beta-D-fructose 6-phosphate + phosphate</text>
        <dbReference type="Rhea" id="RHEA:11064"/>
        <dbReference type="ChEBI" id="CHEBI:15377"/>
        <dbReference type="ChEBI" id="CHEBI:32966"/>
        <dbReference type="ChEBI" id="CHEBI:43474"/>
        <dbReference type="ChEBI" id="CHEBI:57634"/>
        <dbReference type="EC" id="3.1.3.11"/>
    </reaction>
</comment>
<comment type="cofactor">
    <cofactor evidence="1">
        <name>Mg(2+)</name>
        <dbReference type="ChEBI" id="CHEBI:18420"/>
    </cofactor>
    <text evidence="1">Binds 2 magnesium ions per subunit.</text>
</comment>
<comment type="pathway">
    <text evidence="1">Carbohydrate biosynthesis; gluconeogenesis.</text>
</comment>
<comment type="subunit">
    <text evidence="1">Homotetramer.</text>
</comment>
<comment type="subcellular location">
    <subcellularLocation>
        <location evidence="1">Cytoplasm</location>
    </subcellularLocation>
</comment>
<comment type="similarity">
    <text evidence="1">Belongs to the FBPase class 1 family.</text>
</comment>
<gene>
    <name evidence="1" type="primary">fbp2</name>
    <name type="ordered locus">Lcho_3755</name>
</gene>
<dbReference type="EC" id="3.1.3.11" evidence="1"/>
<dbReference type="EMBL" id="CP001013">
    <property type="protein sequence ID" value="ACB36009.1"/>
    <property type="molecule type" value="Genomic_DNA"/>
</dbReference>
<dbReference type="RefSeq" id="WP_012348756.1">
    <property type="nucleotide sequence ID" value="NC_010524.1"/>
</dbReference>
<dbReference type="SMR" id="B1Y5W3"/>
<dbReference type="STRING" id="395495.Lcho_3755"/>
<dbReference type="KEGG" id="lch:Lcho_3755"/>
<dbReference type="eggNOG" id="COG0158">
    <property type="taxonomic scope" value="Bacteria"/>
</dbReference>
<dbReference type="HOGENOM" id="CLU_039977_0_0_4"/>
<dbReference type="OrthoDB" id="9806756at2"/>
<dbReference type="UniPathway" id="UPA00138"/>
<dbReference type="Proteomes" id="UP000001693">
    <property type="component" value="Chromosome"/>
</dbReference>
<dbReference type="GO" id="GO:0005829">
    <property type="term" value="C:cytosol"/>
    <property type="evidence" value="ECO:0007669"/>
    <property type="project" value="TreeGrafter"/>
</dbReference>
<dbReference type="GO" id="GO:0042132">
    <property type="term" value="F:fructose 1,6-bisphosphate 1-phosphatase activity"/>
    <property type="evidence" value="ECO:0007669"/>
    <property type="project" value="UniProtKB-UniRule"/>
</dbReference>
<dbReference type="GO" id="GO:0000287">
    <property type="term" value="F:magnesium ion binding"/>
    <property type="evidence" value="ECO:0007669"/>
    <property type="project" value="UniProtKB-UniRule"/>
</dbReference>
<dbReference type="GO" id="GO:0030388">
    <property type="term" value="P:fructose 1,6-bisphosphate metabolic process"/>
    <property type="evidence" value="ECO:0007669"/>
    <property type="project" value="TreeGrafter"/>
</dbReference>
<dbReference type="GO" id="GO:0006002">
    <property type="term" value="P:fructose 6-phosphate metabolic process"/>
    <property type="evidence" value="ECO:0007669"/>
    <property type="project" value="TreeGrafter"/>
</dbReference>
<dbReference type="GO" id="GO:0006000">
    <property type="term" value="P:fructose metabolic process"/>
    <property type="evidence" value="ECO:0007669"/>
    <property type="project" value="TreeGrafter"/>
</dbReference>
<dbReference type="GO" id="GO:0006094">
    <property type="term" value="P:gluconeogenesis"/>
    <property type="evidence" value="ECO:0007669"/>
    <property type="project" value="UniProtKB-UniRule"/>
</dbReference>
<dbReference type="GO" id="GO:0005986">
    <property type="term" value="P:sucrose biosynthetic process"/>
    <property type="evidence" value="ECO:0007669"/>
    <property type="project" value="TreeGrafter"/>
</dbReference>
<dbReference type="CDD" id="cd00354">
    <property type="entry name" value="FBPase"/>
    <property type="match status" value="1"/>
</dbReference>
<dbReference type="FunFam" id="3.30.540.10:FF:000002">
    <property type="entry name" value="Fructose-1,6-bisphosphatase class 1"/>
    <property type="match status" value="1"/>
</dbReference>
<dbReference type="FunFam" id="3.40.190.80:FF:000011">
    <property type="entry name" value="Fructose-1,6-bisphosphatase class 1"/>
    <property type="match status" value="1"/>
</dbReference>
<dbReference type="Gene3D" id="3.40.190.80">
    <property type="match status" value="1"/>
</dbReference>
<dbReference type="Gene3D" id="3.30.540.10">
    <property type="entry name" value="Fructose-1,6-Bisphosphatase, subunit A, domain 1"/>
    <property type="match status" value="1"/>
</dbReference>
<dbReference type="HAMAP" id="MF_01855">
    <property type="entry name" value="FBPase_class1"/>
    <property type="match status" value="1"/>
</dbReference>
<dbReference type="InterPro" id="IPR044015">
    <property type="entry name" value="FBPase_C_dom"/>
</dbReference>
<dbReference type="InterPro" id="IPR000146">
    <property type="entry name" value="FBPase_class-1"/>
</dbReference>
<dbReference type="InterPro" id="IPR033391">
    <property type="entry name" value="FBPase_N"/>
</dbReference>
<dbReference type="InterPro" id="IPR028343">
    <property type="entry name" value="FBPtase"/>
</dbReference>
<dbReference type="InterPro" id="IPR020548">
    <property type="entry name" value="Fructose_bisphosphatase_AS"/>
</dbReference>
<dbReference type="NCBIfam" id="NF006778">
    <property type="entry name" value="PRK09293.1-1"/>
    <property type="match status" value="1"/>
</dbReference>
<dbReference type="NCBIfam" id="NF006779">
    <property type="entry name" value="PRK09293.1-3"/>
    <property type="match status" value="1"/>
</dbReference>
<dbReference type="NCBIfam" id="NF006780">
    <property type="entry name" value="PRK09293.1-4"/>
    <property type="match status" value="1"/>
</dbReference>
<dbReference type="PANTHER" id="PTHR11556">
    <property type="entry name" value="FRUCTOSE-1,6-BISPHOSPHATASE-RELATED"/>
    <property type="match status" value="1"/>
</dbReference>
<dbReference type="PANTHER" id="PTHR11556:SF35">
    <property type="entry name" value="SEDOHEPTULOSE-1,7-BISPHOSPHATASE, CHLOROPLASTIC"/>
    <property type="match status" value="1"/>
</dbReference>
<dbReference type="Pfam" id="PF00316">
    <property type="entry name" value="FBPase"/>
    <property type="match status" value="1"/>
</dbReference>
<dbReference type="Pfam" id="PF18913">
    <property type="entry name" value="FBPase_C"/>
    <property type="match status" value="1"/>
</dbReference>
<dbReference type="PIRSF" id="PIRSF500210">
    <property type="entry name" value="FBPtase"/>
    <property type="match status" value="1"/>
</dbReference>
<dbReference type="PIRSF" id="PIRSF000904">
    <property type="entry name" value="FBPtase_SBPase"/>
    <property type="match status" value="1"/>
</dbReference>
<dbReference type="PRINTS" id="PR00115">
    <property type="entry name" value="F16BPHPHTASE"/>
</dbReference>
<dbReference type="SUPFAM" id="SSF56655">
    <property type="entry name" value="Carbohydrate phosphatase"/>
    <property type="match status" value="1"/>
</dbReference>
<dbReference type="PROSITE" id="PS00124">
    <property type="entry name" value="FBPASE"/>
    <property type="match status" value="1"/>
</dbReference>
<evidence type="ECO:0000255" key="1">
    <source>
        <dbReference type="HAMAP-Rule" id="MF_01855"/>
    </source>
</evidence>